<organism>
    <name type="scientific">Yersinia enterocolitica serotype O:8 / biotype 1B (strain NCTC 13174 / 8081)</name>
    <dbReference type="NCBI Taxonomy" id="393305"/>
    <lineage>
        <taxon>Bacteria</taxon>
        <taxon>Pseudomonadati</taxon>
        <taxon>Pseudomonadota</taxon>
        <taxon>Gammaproteobacteria</taxon>
        <taxon>Enterobacterales</taxon>
        <taxon>Yersiniaceae</taxon>
        <taxon>Yersinia</taxon>
    </lineage>
</organism>
<evidence type="ECO:0000255" key="1">
    <source>
        <dbReference type="HAMAP-Rule" id="MF_01815"/>
    </source>
</evidence>
<reference key="1">
    <citation type="journal article" date="2006" name="PLoS Genet.">
        <title>The complete genome sequence and comparative genome analysis of the high pathogenicity Yersinia enterocolitica strain 8081.</title>
        <authorList>
            <person name="Thomson N.R."/>
            <person name="Howard S."/>
            <person name="Wren B.W."/>
            <person name="Holden M.T.G."/>
            <person name="Crossman L."/>
            <person name="Challis G.L."/>
            <person name="Churcher C."/>
            <person name="Mungall K."/>
            <person name="Brooks K."/>
            <person name="Chillingworth T."/>
            <person name="Feltwell T."/>
            <person name="Abdellah Z."/>
            <person name="Hauser H."/>
            <person name="Jagels K."/>
            <person name="Maddison M."/>
            <person name="Moule S."/>
            <person name="Sanders M."/>
            <person name="Whitehead S."/>
            <person name="Quail M.A."/>
            <person name="Dougan G."/>
            <person name="Parkhill J."/>
            <person name="Prentice M.B."/>
        </authorList>
    </citation>
    <scope>NUCLEOTIDE SEQUENCE [LARGE SCALE GENOMIC DNA]</scope>
    <source>
        <strain>NCTC 13174 / 8081</strain>
    </source>
</reference>
<sequence>MYTKILGTGSYLPVQVRSNADLEKMVDTSDEWIVTRTGIRERRIAGPDETVASMGFQAAKKALEMAVIDEGIDKKDIGLIIVATTSSSHAFPSSACQVQQMLGIEDAASFDLAAACAGFTYALSVADQYVKSGAVKHAIVIGSDMLSRALDPEDRGTIILFGDGAGAVVLGASEEPGILSTHLHADGKYGELLALPYPDRQHQEQPAYVTMAGNEVFKVAVTELAHIVDETLQANNLDRSALDWLVPHQANLRIISATAKKLGMGMDKVVITLDRHGNTSAASVPAAFDEAVRDGRIQRGQLVLLEAFGGGFTWGSALVRF</sequence>
<comment type="function">
    <text evidence="1">Catalyzes the condensation reaction of fatty acid synthesis by the addition to an acyl acceptor of two carbons from malonyl-ACP. Catalyzes the first condensation reaction which initiates fatty acid synthesis and may therefore play a role in governing the total rate of fatty acid production. Possesses both acetoacetyl-ACP synthase and acetyl transacylase activities. Its substrate specificity determines the biosynthesis of branched-chain and/or straight-chain of fatty acids.</text>
</comment>
<comment type="catalytic activity">
    <reaction evidence="1">
        <text>malonyl-[ACP] + acetyl-CoA + H(+) = 3-oxobutanoyl-[ACP] + CO2 + CoA</text>
        <dbReference type="Rhea" id="RHEA:12080"/>
        <dbReference type="Rhea" id="RHEA-COMP:9623"/>
        <dbReference type="Rhea" id="RHEA-COMP:9625"/>
        <dbReference type="ChEBI" id="CHEBI:15378"/>
        <dbReference type="ChEBI" id="CHEBI:16526"/>
        <dbReference type="ChEBI" id="CHEBI:57287"/>
        <dbReference type="ChEBI" id="CHEBI:57288"/>
        <dbReference type="ChEBI" id="CHEBI:78449"/>
        <dbReference type="ChEBI" id="CHEBI:78450"/>
        <dbReference type="EC" id="2.3.1.180"/>
    </reaction>
</comment>
<comment type="pathway">
    <text evidence="1">Lipid metabolism; fatty acid biosynthesis.</text>
</comment>
<comment type="subunit">
    <text evidence="1">Homodimer.</text>
</comment>
<comment type="subcellular location">
    <subcellularLocation>
        <location evidence="1">Cytoplasm</location>
    </subcellularLocation>
</comment>
<comment type="domain">
    <text evidence="1">The last Arg residue of the ACP-binding site is essential for the weak association between ACP/AcpP and FabH.</text>
</comment>
<comment type="similarity">
    <text evidence="1">Belongs to the thiolase-like superfamily. FabH family.</text>
</comment>
<protein>
    <recommendedName>
        <fullName evidence="1">Beta-ketoacyl-[acyl-carrier-protein] synthase III</fullName>
        <shortName evidence="1">Beta-ketoacyl-ACP synthase III</shortName>
        <shortName evidence="1">KAS III</shortName>
        <ecNumber evidence="1">2.3.1.180</ecNumber>
    </recommendedName>
    <alternativeName>
        <fullName evidence="1">3-oxoacyl-[acyl-carrier-protein] synthase 3</fullName>
    </alternativeName>
    <alternativeName>
        <fullName evidence="1">3-oxoacyl-[acyl-carrier-protein] synthase III</fullName>
    </alternativeName>
</protein>
<feature type="chain" id="PRO_1000056446" description="Beta-ketoacyl-[acyl-carrier-protein] synthase III">
    <location>
        <begin position="1"/>
        <end position="321"/>
    </location>
</feature>
<feature type="region of interest" description="ACP-binding" evidence="1">
    <location>
        <begin position="249"/>
        <end position="253"/>
    </location>
</feature>
<feature type="active site" evidence="1">
    <location>
        <position position="116"/>
    </location>
</feature>
<feature type="active site" evidence="1">
    <location>
        <position position="248"/>
    </location>
</feature>
<feature type="active site" evidence="1">
    <location>
        <position position="278"/>
    </location>
</feature>
<keyword id="KW-0012">Acyltransferase</keyword>
<keyword id="KW-0963">Cytoplasm</keyword>
<keyword id="KW-0275">Fatty acid biosynthesis</keyword>
<keyword id="KW-0276">Fatty acid metabolism</keyword>
<keyword id="KW-0444">Lipid biosynthesis</keyword>
<keyword id="KW-0443">Lipid metabolism</keyword>
<keyword id="KW-0511">Multifunctional enzyme</keyword>
<keyword id="KW-0808">Transferase</keyword>
<dbReference type="EC" id="2.3.1.180" evidence="1"/>
<dbReference type="EMBL" id="AM286415">
    <property type="protein sequence ID" value="CAL11707.1"/>
    <property type="molecule type" value="Genomic_DNA"/>
</dbReference>
<dbReference type="RefSeq" id="WP_005170737.1">
    <property type="nucleotide sequence ID" value="NC_008800.1"/>
</dbReference>
<dbReference type="RefSeq" id="YP_001005922.1">
    <property type="nucleotide sequence ID" value="NC_008800.1"/>
</dbReference>
<dbReference type="SMR" id="A1JN67"/>
<dbReference type="KEGG" id="yen:YE1633"/>
<dbReference type="PATRIC" id="fig|393305.7.peg.1771"/>
<dbReference type="eggNOG" id="COG0332">
    <property type="taxonomic scope" value="Bacteria"/>
</dbReference>
<dbReference type="HOGENOM" id="CLU_039592_4_1_6"/>
<dbReference type="OrthoDB" id="9815506at2"/>
<dbReference type="UniPathway" id="UPA00094"/>
<dbReference type="Proteomes" id="UP000000642">
    <property type="component" value="Chromosome"/>
</dbReference>
<dbReference type="GO" id="GO:0005737">
    <property type="term" value="C:cytoplasm"/>
    <property type="evidence" value="ECO:0007669"/>
    <property type="project" value="UniProtKB-SubCell"/>
</dbReference>
<dbReference type="GO" id="GO:0004315">
    <property type="term" value="F:3-oxoacyl-[acyl-carrier-protein] synthase activity"/>
    <property type="evidence" value="ECO:0007669"/>
    <property type="project" value="InterPro"/>
</dbReference>
<dbReference type="GO" id="GO:0033818">
    <property type="term" value="F:beta-ketoacyl-acyl-carrier-protein synthase III activity"/>
    <property type="evidence" value="ECO:0007669"/>
    <property type="project" value="UniProtKB-UniRule"/>
</dbReference>
<dbReference type="GO" id="GO:0006633">
    <property type="term" value="P:fatty acid biosynthetic process"/>
    <property type="evidence" value="ECO:0007669"/>
    <property type="project" value="UniProtKB-UniRule"/>
</dbReference>
<dbReference type="CDD" id="cd00830">
    <property type="entry name" value="KAS_III"/>
    <property type="match status" value="1"/>
</dbReference>
<dbReference type="FunFam" id="3.40.47.10:FF:000004">
    <property type="entry name" value="3-oxoacyl-[acyl-carrier-protein] synthase 3"/>
    <property type="match status" value="1"/>
</dbReference>
<dbReference type="Gene3D" id="3.40.47.10">
    <property type="match status" value="1"/>
</dbReference>
<dbReference type="HAMAP" id="MF_01815">
    <property type="entry name" value="FabH"/>
    <property type="match status" value="1"/>
</dbReference>
<dbReference type="InterPro" id="IPR013747">
    <property type="entry name" value="ACP_syn_III_C"/>
</dbReference>
<dbReference type="InterPro" id="IPR013751">
    <property type="entry name" value="ACP_syn_III_N"/>
</dbReference>
<dbReference type="InterPro" id="IPR004655">
    <property type="entry name" value="FabH"/>
</dbReference>
<dbReference type="InterPro" id="IPR016039">
    <property type="entry name" value="Thiolase-like"/>
</dbReference>
<dbReference type="NCBIfam" id="TIGR00747">
    <property type="entry name" value="fabH"/>
    <property type="match status" value="1"/>
</dbReference>
<dbReference type="NCBIfam" id="NF006829">
    <property type="entry name" value="PRK09352.1"/>
    <property type="match status" value="1"/>
</dbReference>
<dbReference type="PANTHER" id="PTHR43091">
    <property type="entry name" value="3-OXOACYL-[ACYL-CARRIER-PROTEIN] SYNTHASE"/>
    <property type="match status" value="1"/>
</dbReference>
<dbReference type="PANTHER" id="PTHR43091:SF1">
    <property type="entry name" value="BETA-KETOACYL-[ACYL-CARRIER-PROTEIN] SYNTHASE III, CHLOROPLASTIC"/>
    <property type="match status" value="1"/>
</dbReference>
<dbReference type="Pfam" id="PF08545">
    <property type="entry name" value="ACP_syn_III"/>
    <property type="match status" value="1"/>
</dbReference>
<dbReference type="Pfam" id="PF08541">
    <property type="entry name" value="ACP_syn_III_C"/>
    <property type="match status" value="1"/>
</dbReference>
<dbReference type="SUPFAM" id="SSF53901">
    <property type="entry name" value="Thiolase-like"/>
    <property type="match status" value="1"/>
</dbReference>
<accession>A1JN67</accession>
<name>FABH_YERE8</name>
<proteinExistence type="inferred from homology"/>
<gene>
    <name evidence="1" type="primary">fabH</name>
    <name type="ordered locus">YE1633</name>
</gene>